<feature type="chain" id="PRO_1000193950" description="Large ribosomal subunit protein bL20">
    <location>
        <begin position="1"/>
        <end position="117"/>
    </location>
</feature>
<gene>
    <name evidence="1" type="primary">rplT</name>
    <name type="ordered locus">Ccel_1313</name>
</gene>
<sequence length="117" mass="13142">MARVKGAVRTRARHKKILKLAKGYFGAKSKLFRMANQAVMKSLNYAYNDRRAKKRDFRKLWIARINAAARINGLTYSRFISGLRKSGIELNRKVLADLAVNDAAAFAQLAETAKAAK</sequence>
<keyword id="KW-1185">Reference proteome</keyword>
<keyword id="KW-0687">Ribonucleoprotein</keyword>
<keyword id="KW-0689">Ribosomal protein</keyword>
<keyword id="KW-0694">RNA-binding</keyword>
<keyword id="KW-0699">rRNA-binding</keyword>
<reference key="1">
    <citation type="submission" date="2009-01" db="EMBL/GenBank/DDBJ databases">
        <title>Complete sequence of Clostridium cellulolyticum H10.</title>
        <authorList>
            <consortium name="US DOE Joint Genome Institute"/>
            <person name="Lucas S."/>
            <person name="Copeland A."/>
            <person name="Lapidus A."/>
            <person name="Glavina del Rio T."/>
            <person name="Dalin E."/>
            <person name="Tice H."/>
            <person name="Bruce D."/>
            <person name="Goodwin L."/>
            <person name="Pitluck S."/>
            <person name="Chertkov O."/>
            <person name="Saunders E."/>
            <person name="Brettin T."/>
            <person name="Detter J.C."/>
            <person name="Han C."/>
            <person name="Larimer F."/>
            <person name="Land M."/>
            <person name="Hauser L."/>
            <person name="Kyrpides N."/>
            <person name="Ivanova N."/>
            <person name="Zhou J."/>
            <person name="Richardson P."/>
        </authorList>
    </citation>
    <scope>NUCLEOTIDE SEQUENCE [LARGE SCALE GENOMIC DNA]</scope>
    <source>
        <strain>ATCC 35319 / DSM 5812 / JCM 6584 / H10</strain>
    </source>
</reference>
<comment type="function">
    <text evidence="1">Binds directly to 23S ribosomal RNA and is necessary for the in vitro assembly process of the 50S ribosomal subunit. It is not involved in the protein synthesizing functions of that subunit.</text>
</comment>
<comment type="similarity">
    <text evidence="1">Belongs to the bacterial ribosomal protein bL20 family.</text>
</comment>
<dbReference type="EMBL" id="CP001348">
    <property type="protein sequence ID" value="ACL75667.1"/>
    <property type="molecule type" value="Genomic_DNA"/>
</dbReference>
<dbReference type="RefSeq" id="WP_015924815.1">
    <property type="nucleotide sequence ID" value="NC_011898.1"/>
</dbReference>
<dbReference type="SMR" id="B8I169"/>
<dbReference type="STRING" id="394503.Ccel_1313"/>
<dbReference type="KEGG" id="cce:Ccel_1313"/>
<dbReference type="eggNOG" id="COG0292">
    <property type="taxonomic scope" value="Bacteria"/>
</dbReference>
<dbReference type="HOGENOM" id="CLU_123265_0_1_9"/>
<dbReference type="OrthoDB" id="9808966at2"/>
<dbReference type="Proteomes" id="UP000001349">
    <property type="component" value="Chromosome"/>
</dbReference>
<dbReference type="GO" id="GO:1990904">
    <property type="term" value="C:ribonucleoprotein complex"/>
    <property type="evidence" value="ECO:0007669"/>
    <property type="project" value="UniProtKB-KW"/>
</dbReference>
<dbReference type="GO" id="GO:0005840">
    <property type="term" value="C:ribosome"/>
    <property type="evidence" value="ECO:0007669"/>
    <property type="project" value="UniProtKB-KW"/>
</dbReference>
<dbReference type="GO" id="GO:0019843">
    <property type="term" value="F:rRNA binding"/>
    <property type="evidence" value="ECO:0007669"/>
    <property type="project" value="UniProtKB-UniRule"/>
</dbReference>
<dbReference type="GO" id="GO:0003735">
    <property type="term" value="F:structural constituent of ribosome"/>
    <property type="evidence" value="ECO:0007669"/>
    <property type="project" value="InterPro"/>
</dbReference>
<dbReference type="GO" id="GO:0000027">
    <property type="term" value="P:ribosomal large subunit assembly"/>
    <property type="evidence" value="ECO:0007669"/>
    <property type="project" value="UniProtKB-UniRule"/>
</dbReference>
<dbReference type="GO" id="GO:0006412">
    <property type="term" value="P:translation"/>
    <property type="evidence" value="ECO:0007669"/>
    <property type="project" value="InterPro"/>
</dbReference>
<dbReference type="CDD" id="cd07026">
    <property type="entry name" value="Ribosomal_L20"/>
    <property type="match status" value="1"/>
</dbReference>
<dbReference type="FunFam" id="1.10.1900.20:FF:000001">
    <property type="entry name" value="50S ribosomal protein L20"/>
    <property type="match status" value="1"/>
</dbReference>
<dbReference type="Gene3D" id="6.10.160.10">
    <property type="match status" value="1"/>
</dbReference>
<dbReference type="Gene3D" id="1.10.1900.20">
    <property type="entry name" value="Ribosomal protein L20"/>
    <property type="match status" value="1"/>
</dbReference>
<dbReference type="HAMAP" id="MF_00382">
    <property type="entry name" value="Ribosomal_bL20"/>
    <property type="match status" value="1"/>
</dbReference>
<dbReference type="InterPro" id="IPR005813">
    <property type="entry name" value="Ribosomal_bL20"/>
</dbReference>
<dbReference type="InterPro" id="IPR049946">
    <property type="entry name" value="RIBOSOMAL_L20_CS"/>
</dbReference>
<dbReference type="InterPro" id="IPR035566">
    <property type="entry name" value="Ribosomal_protein_bL20_C"/>
</dbReference>
<dbReference type="NCBIfam" id="TIGR01032">
    <property type="entry name" value="rplT_bact"/>
    <property type="match status" value="1"/>
</dbReference>
<dbReference type="PANTHER" id="PTHR10986">
    <property type="entry name" value="39S RIBOSOMAL PROTEIN L20"/>
    <property type="match status" value="1"/>
</dbReference>
<dbReference type="Pfam" id="PF00453">
    <property type="entry name" value="Ribosomal_L20"/>
    <property type="match status" value="1"/>
</dbReference>
<dbReference type="PRINTS" id="PR00062">
    <property type="entry name" value="RIBOSOMALL20"/>
</dbReference>
<dbReference type="SUPFAM" id="SSF74731">
    <property type="entry name" value="Ribosomal protein L20"/>
    <property type="match status" value="1"/>
</dbReference>
<dbReference type="PROSITE" id="PS00937">
    <property type="entry name" value="RIBOSOMAL_L20"/>
    <property type="match status" value="1"/>
</dbReference>
<evidence type="ECO:0000255" key="1">
    <source>
        <dbReference type="HAMAP-Rule" id="MF_00382"/>
    </source>
</evidence>
<evidence type="ECO:0000305" key="2"/>
<name>RL20_RUMCH</name>
<protein>
    <recommendedName>
        <fullName evidence="1">Large ribosomal subunit protein bL20</fullName>
    </recommendedName>
    <alternativeName>
        <fullName evidence="2">50S ribosomal protein L20</fullName>
    </alternativeName>
</protein>
<organism>
    <name type="scientific">Ruminiclostridium cellulolyticum (strain ATCC 35319 / DSM 5812 / JCM 6584 / H10)</name>
    <name type="common">Clostridium cellulolyticum</name>
    <dbReference type="NCBI Taxonomy" id="394503"/>
    <lineage>
        <taxon>Bacteria</taxon>
        <taxon>Bacillati</taxon>
        <taxon>Bacillota</taxon>
        <taxon>Clostridia</taxon>
        <taxon>Eubacteriales</taxon>
        <taxon>Oscillospiraceae</taxon>
        <taxon>Ruminiclostridium</taxon>
    </lineage>
</organism>
<accession>B8I169</accession>
<proteinExistence type="inferred from homology"/>